<gene>
    <name evidence="4" type="primary">nscD</name>
    <name type="ORF">TEQG_05347</name>
</gene>
<comment type="function">
    <text evidence="1 2 3">Prenyltransferase; part of the gene cluster that mediates the biosynthesis of neosartoricin B, a prenylated anthracenone that probably exhibits T-cell antiproliferative activity, suggestive of a physiological role as an immunosuppressive agent (PubMed:23758576). The non-reducing polyketide synthase nscA probably synthesizes and cyclizes the decaketide backbone (By similarity). The hydrolase nscB then mediates the product release through hydrolysis followed by spontaneous decarboxylation (By similarity). The prenyltransferase nscD catalyzes the addition of the dimethylallyl group to the aromatic C5 (By similarity). The FAD-dependent monooxygenase nscC is then responsible for the stereospecific hydroxylation at C2 (By similarity). Neosartoricin B can be converted into two additional compounds neosartoricins C and D (By similarity). Neosartoricin C is a spirocyclic compound that is cyclized through the attack of C3 hydroxyl on C14, followed by dehydration (By similarity). On the other hand, neosartoricin D is a further cyclized compound in which attack of C2 on C14 in neosartoricin C results in the formation of the acetal-containing dioxabicyclo-octanone ring (By similarity). Both of these compounds are novel and possibly represent related metabolites of the gene cluster (By similarity).</text>
</comment>
<comment type="pathway">
    <text evidence="6">Secondary metabolite biosynthesis.</text>
</comment>
<comment type="similarity">
    <text evidence="5">Belongs to the tryptophan dimethylallyltransferase family.</text>
</comment>
<sequence>MTSVPIFESVSRFLPPANEDEQYWWKITGQHMARMMHEAGYPEDRQVECLLFHRFKVIPCLGPRPRSDTPWYKSRVGGGAADGCPINYSWRFGTADRKPHIRNFIEPLGALTNTPADPLNEVATKALLQDYSMTLPNVDLEAFWTFAPHYRPRIIEKADIEKLAGASLLVGAEMSPDSHTIDIKAYMYPRVPSQTSQLLTTILPQAMRDAYGENVCLDSLNFVHEFMTKDPQGSQLVLTGTTGIDCCKLQDTRVKIYVITRNTSFDHIAAIMTLGGRRPISEELLGQLKALWYELKGAPAELPSSEQLPVQTKPDGSKNPIVVPFYFDIQPRLALPDVKAYIDVSTSPVSDLAAANAVVRHLEQHGSGQNPKAYLNVLKDITPVEELETQKGVLAFYSVAVKKNELDITSYFNPQVYKRYFAHEVHLNGQRRSVFE</sequence>
<keyword id="KW-0808">Transferase</keyword>
<proteinExistence type="inferred from homology"/>
<feature type="chain" id="PRO_0000437918" description="Prenyltransferase nscD">
    <location>
        <begin position="1"/>
        <end position="436"/>
    </location>
</feature>
<reference key="1">
    <citation type="journal article" date="2012" name="MBio">
        <title>Comparative genome analysis of Trichophyton rubrum and related dermatophytes reveals candidate genes involved in infection.</title>
        <authorList>
            <person name="Martinez D.A."/>
            <person name="Oliver B.G."/>
            <person name="Graeser Y."/>
            <person name="Goldberg J.M."/>
            <person name="Li W."/>
            <person name="Martinez-Rossi N.M."/>
            <person name="Monod M."/>
            <person name="Shelest E."/>
            <person name="Barton R.C."/>
            <person name="Birch E."/>
            <person name="Brakhage A.A."/>
            <person name="Chen Z."/>
            <person name="Gurr S.J."/>
            <person name="Heiman D."/>
            <person name="Heitman J."/>
            <person name="Kosti I."/>
            <person name="Rossi A."/>
            <person name="Saif S."/>
            <person name="Samalova M."/>
            <person name="Saunders C.W."/>
            <person name="Shea T."/>
            <person name="Summerbell R.C."/>
            <person name="Xu J."/>
            <person name="Young S."/>
            <person name="Zeng Q."/>
            <person name="Birren B.W."/>
            <person name="Cuomo C.A."/>
            <person name="White T.C."/>
        </authorList>
    </citation>
    <scope>NUCLEOTIDE SEQUENCE [LARGE SCALE GENOMIC DNA]</scope>
    <source>
        <strain>ATCC MYA-4606 / CBS 127.97</strain>
    </source>
</reference>
<reference key="2">
    <citation type="journal article" date="2013" name="ACS Synth. Biol.">
        <title>Discovery of cryptic polyketide metabolites from dermatophytes using heterologous expression in Aspergillus nidulans.</title>
        <authorList>
            <person name="Yin W.B."/>
            <person name="Chooi Y.H."/>
            <person name="Smith A.R."/>
            <person name="Cacho R.A."/>
            <person name="Hu Y."/>
            <person name="White T.C."/>
            <person name="Tang Y."/>
        </authorList>
    </citation>
    <scope>FUNCTION</scope>
</reference>
<protein>
    <recommendedName>
        <fullName evidence="4">Prenyltransferase nscD</fullName>
        <ecNumber evidence="6">2.5.1.-</ecNumber>
    </recommendedName>
    <alternativeName>
        <fullName evidence="4">Neosartoricin B biosynthesis protein D</fullName>
    </alternativeName>
</protein>
<name>NSCD_TRIEC</name>
<dbReference type="EC" id="2.5.1.-" evidence="6"/>
<dbReference type="EMBL" id="DS995747">
    <property type="protein sequence ID" value="EGE06344.1"/>
    <property type="molecule type" value="Genomic_DNA"/>
</dbReference>
<dbReference type="SMR" id="F2PWS6"/>
<dbReference type="VEuPathDB" id="FungiDB:TEQG_05347"/>
<dbReference type="eggNOG" id="ENOG502S2XP">
    <property type="taxonomic scope" value="Eukaryota"/>
</dbReference>
<dbReference type="HOGENOM" id="CLU_037431_2_2_1"/>
<dbReference type="OrthoDB" id="472at34384"/>
<dbReference type="Proteomes" id="UP000009169">
    <property type="component" value="Unassembled WGS sequence"/>
</dbReference>
<dbReference type="GO" id="GO:0004659">
    <property type="term" value="F:prenyltransferase activity"/>
    <property type="evidence" value="ECO:0007669"/>
    <property type="project" value="TreeGrafter"/>
</dbReference>
<dbReference type="GO" id="GO:0009820">
    <property type="term" value="P:alkaloid metabolic process"/>
    <property type="evidence" value="ECO:0007669"/>
    <property type="project" value="InterPro"/>
</dbReference>
<dbReference type="CDD" id="cd13929">
    <property type="entry name" value="PT-DMATS_CymD"/>
    <property type="match status" value="1"/>
</dbReference>
<dbReference type="InterPro" id="IPR033964">
    <property type="entry name" value="Aro_prenylTrfase"/>
</dbReference>
<dbReference type="InterPro" id="IPR017795">
    <property type="entry name" value="Aro_prenylTrfase_DMATS"/>
</dbReference>
<dbReference type="NCBIfam" id="TIGR03429">
    <property type="entry name" value="arom_pren_DMATS"/>
    <property type="match status" value="1"/>
</dbReference>
<dbReference type="PANTHER" id="PTHR40627">
    <property type="entry name" value="INDOLE PRENYLTRANSFERASE TDIB-RELATED"/>
    <property type="match status" value="1"/>
</dbReference>
<dbReference type="PANTHER" id="PTHR40627:SF4">
    <property type="entry name" value="PRENYLTRANSFERASE ASQH1-RELATED"/>
    <property type="match status" value="1"/>
</dbReference>
<dbReference type="Pfam" id="PF11991">
    <property type="entry name" value="Trp_DMAT"/>
    <property type="match status" value="1"/>
</dbReference>
<dbReference type="SFLD" id="SFLDS00036">
    <property type="entry name" value="Aromatic_Prenyltransferase"/>
    <property type="match status" value="1"/>
</dbReference>
<organism>
    <name type="scientific">Trichophyton equinum (strain ATCC MYA-4606 / CBS 127.97)</name>
    <name type="common">Horse ringworm fungus</name>
    <dbReference type="NCBI Taxonomy" id="559882"/>
    <lineage>
        <taxon>Eukaryota</taxon>
        <taxon>Fungi</taxon>
        <taxon>Dikarya</taxon>
        <taxon>Ascomycota</taxon>
        <taxon>Pezizomycotina</taxon>
        <taxon>Eurotiomycetes</taxon>
        <taxon>Eurotiomycetidae</taxon>
        <taxon>Onygenales</taxon>
        <taxon>Arthrodermataceae</taxon>
        <taxon>Trichophyton</taxon>
    </lineage>
</organism>
<accession>F2PWS6</accession>
<evidence type="ECO:0000250" key="1">
    <source>
        <dbReference type="UniProtKB" id="A1D8I8"/>
    </source>
</evidence>
<evidence type="ECO:0000250" key="2">
    <source>
        <dbReference type="UniProtKB" id="F2S700"/>
    </source>
</evidence>
<evidence type="ECO:0000269" key="3">
    <source>
    </source>
</evidence>
<evidence type="ECO:0000303" key="4">
    <source>
    </source>
</evidence>
<evidence type="ECO:0000305" key="5"/>
<evidence type="ECO:0000305" key="6">
    <source>
    </source>
</evidence>